<gene>
    <name evidence="2" type="primary">rpmA</name>
    <name type="ordered locus">SMU_849</name>
</gene>
<evidence type="ECO:0000250" key="1">
    <source>
        <dbReference type="UniProtKB" id="Q2FXT0"/>
    </source>
</evidence>
<evidence type="ECO:0000255" key="2">
    <source>
        <dbReference type="HAMAP-Rule" id="MF_00539"/>
    </source>
</evidence>
<evidence type="ECO:0000256" key="3">
    <source>
        <dbReference type="SAM" id="MobiDB-lite"/>
    </source>
</evidence>
<evidence type="ECO:0000305" key="4"/>
<protein>
    <recommendedName>
        <fullName evidence="2">Large ribosomal subunit protein bL27</fullName>
    </recommendedName>
    <alternativeName>
        <fullName evidence="4">50S ribosomal protein L27</fullName>
    </alternativeName>
</protein>
<keyword id="KW-1185">Reference proteome</keyword>
<keyword id="KW-0687">Ribonucleoprotein</keyword>
<keyword id="KW-0689">Ribosomal protein</keyword>
<proteinExistence type="inferred from homology"/>
<sequence>MLKMNLANLQLFAHKKGGGSTSNGRDSESKRLGAKAADGQTVTGGSILYRQRGTHIYPGANVGRGGDDTLFAKVEGVVRFERKGRDKKQVSVYPIAK</sequence>
<name>RL27_STRMU</name>
<organism>
    <name type="scientific">Streptococcus mutans serotype c (strain ATCC 700610 / UA159)</name>
    <dbReference type="NCBI Taxonomy" id="210007"/>
    <lineage>
        <taxon>Bacteria</taxon>
        <taxon>Bacillati</taxon>
        <taxon>Bacillota</taxon>
        <taxon>Bacilli</taxon>
        <taxon>Lactobacillales</taxon>
        <taxon>Streptococcaceae</taxon>
        <taxon>Streptococcus</taxon>
    </lineage>
</organism>
<reference key="1">
    <citation type="journal article" date="2002" name="Proc. Natl. Acad. Sci. U.S.A.">
        <title>Genome sequence of Streptococcus mutans UA159, a cariogenic dental pathogen.</title>
        <authorList>
            <person name="Ajdic D.J."/>
            <person name="McShan W.M."/>
            <person name="McLaughlin R.E."/>
            <person name="Savic G."/>
            <person name="Chang J."/>
            <person name="Carson M.B."/>
            <person name="Primeaux C."/>
            <person name="Tian R."/>
            <person name="Kenton S."/>
            <person name="Jia H.G."/>
            <person name="Lin S.P."/>
            <person name="Qian Y."/>
            <person name="Li S."/>
            <person name="Zhu H."/>
            <person name="Najar F.Z."/>
            <person name="Lai H."/>
            <person name="White J."/>
            <person name="Roe B.A."/>
            <person name="Ferretti J.J."/>
        </authorList>
    </citation>
    <scope>NUCLEOTIDE SEQUENCE [LARGE SCALE GENOMIC DNA]</scope>
    <source>
        <strain>ATCC 700610 / UA159</strain>
    </source>
</reference>
<feature type="propeptide" id="PRO_0000459950" evidence="1">
    <location>
        <begin position="1"/>
        <end position="12"/>
    </location>
</feature>
<feature type="chain" id="PRO_0000181177" description="Large ribosomal subunit protein bL27">
    <location>
        <begin position="13"/>
        <end position="97"/>
    </location>
</feature>
<feature type="region of interest" description="Disordered" evidence="3">
    <location>
        <begin position="14"/>
        <end position="38"/>
    </location>
</feature>
<accession>Q8DUQ4</accession>
<comment type="PTM">
    <text evidence="1">The N-terminus is cleaved by ribosomal processing cysteine protease Prp.</text>
</comment>
<comment type="similarity">
    <text evidence="2">Belongs to the bacterial ribosomal protein bL27 family.</text>
</comment>
<dbReference type="EMBL" id="AE014133">
    <property type="protein sequence ID" value="AAN58565.1"/>
    <property type="molecule type" value="Genomic_DNA"/>
</dbReference>
<dbReference type="RefSeq" id="NP_721259.1">
    <property type="nucleotide sequence ID" value="NC_004350.2"/>
</dbReference>
<dbReference type="RefSeq" id="WP_002261998.1">
    <property type="nucleotide sequence ID" value="NC_004350.2"/>
</dbReference>
<dbReference type="SMR" id="Q8DUQ4"/>
<dbReference type="STRING" id="210007.SMU_849"/>
<dbReference type="GeneID" id="93859621"/>
<dbReference type="KEGG" id="smu:SMU_849"/>
<dbReference type="PATRIC" id="fig|210007.7.peg.755"/>
<dbReference type="eggNOG" id="COG0211">
    <property type="taxonomic scope" value="Bacteria"/>
</dbReference>
<dbReference type="HOGENOM" id="CLU_095424_4_0_9"/>
<dbReference type="OrthoDB" id="9803474at2"/>
<dbReference type="PhylomeDB" id="Q8DUQ4"/>
<dbReference type="Proteomes" id="UP000002512">
    <property type="component" value="Chromosome"/>
</dbReference>
<dbReference type="GO" id="GO:0022625">
    <property type="term" value="C:cytosolic large ribosomal subunit"/>
    <property type="evidence" value="ECO:0007669"/>
    <property type="project" value="TreeGrafter"/>
</dbReference>
<dbReference type="GO" id="GO:0003735">
    <property type="term" value="F:structural constituent of ribosome"/>
    <property type="evidence" value="ECO:0007669"/>
    <property type="project" value="InterPro"/>
</dbReference>
<dbReference type="GO" id="GO:0006412">
    <property type="term" value="P:translation"/>
    <property type="evidence" value="ECO:0007669"/>
    <property type="project" value="UniProtKB-UniRule"/>
</dbReference>
<dbReference type="FunFam" id="2.40.50.100:FF:000004">
    <property type="entry name" value="50S ribosomal protein L27"/>
    <property type="match status" value="1"/>
</dbReference>
<dbReference type="Gene3D" id="2.40.50.100">
    <property type="match status" value="1"/>
</dbReference>
<dbReference type="HAMAP" id="MF_00539">
    <property type="entry name" value="Ribosomal_bL27"/>
    <property type="match status" value="1"/>
</dbReference>
<dbReference type="InterPro" id="IPR001684">
    <property type="entry name" value="Ribosomal_bL27"/>
</dbReference>
<dbReference type="InterPro" id="IPR018261">
    <property type="entry name" value="Ribosomal_bL27_CS"/>
</dbReference>
<dbReference type="NCBIfam" id="TIGR00062">
    <property type="entry name" value="L27"/>
    <property type="match status" value="1"/>
</dbReference>
<dbReference type="PANTHER" id="PTHR15893:SF0">
    <property type="entry name" value="LARGE RIBOSOMAL SUBUNIT PROTEIN BL27M"/>
    <property type="match status" value="1"/>
</dbReference>
<dbReference type="PANTHER" id="PTHR15893">
    <property type="entry name" value="RIBOSOMAL PROTEIN L27"/>
    <property type="match status" value="1"/>
</dbReference>
<dbReference type="Pfam" id="PF01016">
    <property type="entry name" value="Ribosomal_L27"/>
    <property type="match status" value="1"/>
</dbReference>
<dbReference type="PRINTS" id="PR00063">
    <property type="entry name" value="RIBOSOMALL27"/>
</dbReference>
<dbReference type="SUPFAM" id="SSF110324">
    <property type="entry name" value="Ribosomal L27 protein-like"/>
    <property type="match status" value="1"/>
</dbReference>
<dbReference type="PROSITE" id="PS00831">
    <property type="entry name" value="RIBOSOMAL_L27"/>
    <property type="match status" value="1"/>
</dbReference>